<name>PCP_SACI6</name>
<organism>
    <name type="scientific">Saccharolobus islandicus (strain M.16.4 / Kamchatka #3)</name>
    <name type="common">Sulfolobus islandicus</name>
    <dbReference type="NCBI Taxonomy" id="426118"/>
    <lineage>
        <taxon>Archaea</taxon>
        <taxon>Thermoproteota</taxon>
        <taxon>Thermoprotei</taxon>
        <taxon>Sulfolobales</taxon>
        <taxon>Sulfolobaceae</taxon>
        <taxon>Saccharolobus</taxon>
    </lineage>
</organism>
<proteinExistence type="inferred from homology"/>
<reference key="1">
    <citation type="journal article" date="2009" name="Proc. Natl. Acad. Sci. U.S.A.">
        <title>Biogeography of the Sulfolobus islandicus pan-genome.</title>
        <authorList>
            <person name="Reno M.L."/>
            <person name="Held N.L."/>
            <person name="Fields C.J."/>
            <person name="Burke P.V."/>
            <person name="Whitaker R.J."/>
        </authorList>
    </citation>
    <scope>NUCLEOTIDE SEQUENCE [LARGE SCALE GENOMIC DNA]</scope>
    <source>
        <strain>M.16.4 / Kamchatka #3</strain>
    </source>
</reference>
<dbReference type="EC" id="3.4.19.3" evidence="1"/>
<dbReference type="EMBL" id="CP001402">
    <property type="protein sequence ID" value="ACR41164.1"/>
    <property type="molecule type" value="Genomic_DNA"/>
</dbReference>
<dbReference type="RefSeq" id="WP_010923507.1">
    <property type="nucleotide sequence ID" value="NC_012726.1"/>
</dbReference>
<dbReference type="SMR" id="C4KEG7"/>
<dbReference type="MEROPS" id="C15.001"/>
<dbReference type="KEGG" id="sid:M164_0533"/>
<dbReference type="HOGENOM" id="CLU_043960_4_3_2"/>
<dbReference type="Proteomes" id="UP000001479">
    <property type="component" value="Chromosome"/>
</dbReference>
<dbReference type="GO" id="GO:0005829">
    <property type="term" value="C:cytosol"/>
    <property type="evidence" value="ECO:0007669"/>
    <property type="project" value="InterPro"/>
</dbReference>
<dbReference type="GO" id="GO:0016920">
    <property type="term" value="F:pyroglutamyl-peptidase activity"/>
    <property type="evidence" value="ECO:0007669"/>
    <property type="project" value="UniProtKB-UniRule"/>
</dbReference>
<dbReference type="GO" id="GO:0006508">
    <property type="term" value="P:proteolysis"/>
    <property type="evidence" value="ECO:0007669"/>
    <property type="project" value="UniProtKB-KW"/>
</dbReference>
<dbReference type="CDD" id="cd00501">
    <property type="entry name" value="Peptidase_C15"/>
    <property type="match status" value="1"/>
</dbReference>
<dbReference type="FunFam" id="3.40.630.20:FF:000005">
    <property type="entry name" value="Pyrrolidone-carboxylate peptidase"/>
    <property type="match status" value="1"/>
</dbReference>
<dbReference type="Gene3D" id="3.40.630.20">
    <property type="entry name" value="Peptidase C15, pyroglutamyl peptidase I-like"/>
    <property type="match status" value="1"/>
</dbReference>
<dbReference type="HAMAP" id="MF_00417">
    <property type="entry name" value="Pyrrolid_peptidase"/>
    <property type="match status" value="1"/>
</dbReference>
<dbReference type="InterPro" id="IPR000816">
    <property type="entry name" value="Peptidase_C15"/>
</dbReference>
<dbReference type="InterPro" id="IPR016125">
    <property type="entry name" value="Peptidase_C15-like"/>
</dbReference>
<dbReference type="InterPro" id="IPR036440">
    <property type="entry name" value="Peptidase_C15-like_sf"/>
</dbReference>
<dbReference type="InterPro" id="IPR029762">
    <property type="entry name" value="PGP-I_bact-type"/>
</dbReference>
<dbReference type="InterPro" id="IPR033694">
    <property type="entry name" value="PGPEP1_Cys_AS"/>
</dbReference>
<dbReference type="InterPro" id="IPR033693">
    <property type="entry name" value="PGPEP1_Glu_AS"/>
</dbReference>
<dbReference type="NCBIfam" id="NF009672">
    <property type="entry name" value="PRK13193.1"/>
    <property type="match status" value="1"/>
</dbReference>
<dbReference type="PANTHER" id="PTHR23402">
    <property type="entry name" value="PROTEASE FAMILY C15 PYROGLUTAMYL-PEPTIDASE I-RELATED"/>
    <property type="match status" value="1"/>
</dbReference>
<dbReference type="PANTHER" id="PTHR23402:SF1">
    <property type="entry name" value="PYROGLUTAMYL-PEPTIDASE I"/>
    <property type="match status" value="1"/>
</dbReference>
<dbReference type="Pfam" id="PF01470">
    <property type="entry name" value="Peptidase_C15"/>
    <property type="match status" value="1"/>
</dbReference>
<dbReference type="PIRSF" id="PIRSF015592">
    <property type="entry name" value="Prld-crbxl_pptds"/>
    <property type="match status" value="1"/>
</dbReference>
<dbReference type="PRINTS" id="PR00706">
    <property type="entry name" value="PYROGLUPTASE"/>
</dbReference>
<dbReference type="SUPFAM" id="SSF53182">
    <property type="entry name" value="Pyrrolidone carboxyl peptidase (pyroglutamate aminopeptidase)"/>
    <property type="match status" value="1"/>
</dbReference>
<dbReference type="PROSITE" id="PS01334">
    <property type="entry name" value="PYRASE_CYS"/>
    <property type="match status" value="1"/>
</dbReference>
<dbReference type="PROSITE" id="PS01333">
    <property type="entry name" value="PYRASE_GLU"/>
    <property type="match status" value="1"/>
</dbReference>
<feature type="chain" id="PRO_1000206025" description="Pyrrolidone-carboxylate peptidase">
    <location>
        <begin position="1"/>
        <end position="209"/>
    </location>
</feature>
<feature type="active site" evidence="1">
    <location>
        <position position="79"/>
    </location>
</feature>
<feature type="active site" evidence="1">
    <location>
        <position position="142"/>
    </location>
</feature>
<feature type="active site" evidence="1">
    <location>
        <position position="164"/>
    </location>
</feature>
<protein>
    <recommendedName>
        <fullName evidence="1">Pyrrolidone-carboxylate peptidase</fullName>
        <ecNumber evidence="1">3.4.19.3</ecNumber>
    </recommendedName>
    <alternativeName>
        <fullName evidence="1">5-oxoprolyl-peptidase</fullName>
    </alternativeName>
    <alternativeName>
        <fullName evidence="1">Pyroglutamyl-peptidase I</fullName>
        <shortName evidence="1">PGP-I</shortName>
        <shortName evidence="1">Pyrase</shortName>
    </alternativeName>
</protein>
<comment type="function">
    <text evidence="1">Removes 5-oxoproline from various penultimate amino acid residues except L-proline.</text>
</comment>
<comment type="catalytic activity">
    <reaction evidence="1">
        <text>Release of an N-terminal pyroglutamyl group from a polypeptide, the second amino acid generally not being Pro.</text>
        <dbReference type="EC" id="3.4.19.3"/>
    </reaction>
</comment>
<comment type="subunit">
    <text evidence="1">Homotetramer.</text>
</comment>
<comment type="subcellular location">
    <subcellularLocation>
        <location evidence="1">Cytoplasm</location>
    </subcellularLocation>
</comment>
<comment type="similarity">
    <text evidence="1">Belongs to the peptidase C15 family.</text>
</comment>
<gene>
    <name evidence="1" type="primary">pcp</name>
    <name type="ordered locus">M164_0533</name>
</gene>
<evidence type="ECO:0000255" key="1">
    <source>
        <dbReference type="HAMAP-Rule" id="MF_00417"/>
    </source>
</evidence>
<keyword id="KW-0963">Cytoplasm</keyword>
<keyword id="KW-0378">Hydrolase</keyword>
<keyword id="KW-0645">Protease</keyword>
<keyword id="KW-0788">Thiol protease</keyword>
<accession>C4KEG7</accession>
<sequence>MTVLLFGFEPFLEYKENPSQLIVEALNGSTILKEEVKGVILPVEYEKIEDLIVTKIREMKPILTLGIGVAPGRAKITPEKIAINYKYSREGDNAGKKYKGEKIDPLGQDGIFTNIPVEDLVDLLNENGIPAELSLSAGSYLCNNAMYIIIREARKYNSLGGFIHVPLHESYAARIQRPIPSMSLDTMIRGIRLSMEFILTNKKENLTFS</sequence>